<sequence>MKNIRNFSIIAHIDHGKSTLSDRFIQVCNGLSEREMKEQVLDSMDIERERGITIKAQSVTLDYTARDGQTYQLNFIDTPGHVDFSYEVSRSLAACEGALLVVDAAQGVEAQTVANCYTAIEQNLEVIPILNKIDLPSAEPDRVAQEIEEIIGIDATGATTCSAKTGIGVEDVLETIVAKVPAPEGDVNAKLQALIIDSWFDNYLGVVSLVRVKNGTIKKGEKFKVMSTGVAYQVDRLGVFTPKMKDLDHLKAGEVGFIVAGIKDIHGAPVGDTLTHAHNPTDKPVPGFKKVQPQVYAGMFTISSDDYPDFREALEKLSLNDASLFFEPEVSQALGFGFRCGFLGMLHMEIIQERLEREYNLDLITSAPTVVYKAIKKDGEIIEVDNPSKLPEPGAIAEIQEPIVRANILVPKDYVGSVITICIEKRGVQVDLNYVGNQVSITYDLPMIEVVSDFFDTLKSVTKGYGSLDYELIRYEPANMVRLDVLINGDKVDALASIVHKDQAKYKGRELVERLKELIPRQMFEVAIQAAIGGTIVARSTVKALRKNVLAKCYGGDVSRKKKLLEKQKEGKKRMKNIGSVEIPQEAFLSVLKK</sequence>
<protein>
    <recommendedName>
        <fullName evidence="1">Elongation factor 4</fullName>
        <shortName evidence="1">EF-4</shortName>
        <ecNumber evidence="1">3.6.5.n1</ecNumber>
    </recommendedName>
    <alternativeName>
        <fullName evidence="1">Ribosomal back-translocase LepA</fullName>
    </alternativeName>
</protein>
<keyword id="KW-0997">Cell inner membrane</keyword>
<keyword id="KW-1003">Cell membrane</keyword>
<keyword id="KW-0342">GTP-binding</keyword>
<keyword id="KW-0378">Hydrolase</keyword>
<keyword id="KW-0472">Membrane</keyword>
<keyword id="KW-0547">Nucleotide-binding</keyword>
<keyword id="KW-0648">Protein biosynthesis</keyword>
<proteinExistence type="inferred from homology"/>
<organism>
    <name type="scientific">Francisella tularensis subsp. novicida (strain U112)</name>
    <dbReference type="NCBI Taxonomy" id="401614"/>
    <lineage>
        <taxon>Bacteria</taxon>
        <taxon>Pseudomonadati</taxon>
        <taxon>Pseudomonadota</taxon>
        <taxon>Gammaproteobacteria</taxon>
        <taxon>Thiotrichales</taxon>
        <taxon>Francisellaceae</taxon>
        <taxon>Francisella</taxon>
    </lineage>
</organism>
<accession>A0Q453</accession>
<feature type="chain" id="PRO_1000031998" description="Elongation factor 4">
    <location>
        <begin position="1"/>
        <end position="594"/>
    </location>
</feature>
<feature type="domain" description="tr-type G">
    <location>
        <begin position="2"/>
        <end position="184"/>
    </location>
</feature>
<feature type="binding site" evidence="1">
    <location>
        <begin position="14"/>
        <end position="19"/>
    </location>
    <ligand>
        <name>GTP</name>
        <dbReference type="ChEBI" id="CHEBI:37565"/>
    </ligand>
</feature>
<feature type="binding site" evidence="1">
    <location>
        <begin position="131"/>
        <end position="134"/>
    </location>
    <ligand>
        <name>GTP</name>
        <dbReference type="ChEBI" id="CHEBI:37565"/>
    </ligand>
</feature>
<reference key="1">
    <citation type="journal article" date="2007" name="Genome Biol.">
        <title>Comparison of Francisella tularensis genomes reveals evolutionary events associated with the emergence of human pathogenic strains.</title>
        <authorList>
            <person name="Rohmer L."/>
            <person name="Fong C."/>
            <person name="Abmayr S."/>
            <person name="Wasnick M."/>
            <person name="Larson Freeman T.J."/>
            <person name="Radey M."/>
            <person name="Guina T."/>
            <person name="Svensson K."/>
            <person name="Hayden H.S."/>
            <person name="Jacobs M."/>
            <person name="Gallagher L.A."/>
            <person name="Manoil C."/>
            <person name="Ernst R.K."/>
            <person name="Drees B."/>
            <person name="Buckley D."/>
            <person name="Haugen E."/>
            <person name="Bovee D."/>
            <person name="Zhou Y."/>
            <person name="Chang J."/>
            <person name="Levy R."/>
            <person name="Lim R."/>
            <person name="Gillett W."/>
            <person name="Guenthener D."/>
            <person name="Kang A."/>
            <person name="Shaffer S.A."/>
            <person name="Taylor G."/>
            <person name="Chen J."/>
            <person name="Gallis B."/>
            <person name="D'Argenio D.A."/>
            <person name="Forsman M."/>
            <person name="Olson M.V."/>
            <person name="Goodlett D.R."/>
            <person name="Kaul R."/>
            <person name="Miller S.I."/>
            <person name="Brittnacher M.J."/>
        </authorList>
    </citation>
    <scope>NUCLEOTIDE SEQUENCE [LARGE SCALE GENOMIC DNA]</scope>
    <source>
        <strain>U112</strain>
    </source>
</reference>
<dbReference type="EC" id="3.6.5.n1" evidence="1"/>
<dbReference type="EMBL" id="CP000439">
    <property type="protein sequence ID" value="ABK89018.1"/>
    <property type="molecule type" value="Genomic_DNA"/>
</dbReference>
<dbReference type="RefSeq" id="WP_003032762.1">
    <property type="nucleotide sequence ID" value="NZ_CP009633.1"/>
</dbReference>
<dbReference type="SMR" id="A0Q453"/>
<dbReference type="GeneID" id="75264395"/>
<dbReference type="KEGG" id="ftn:FTN_0107"/>
<dbReference type="KEGG" id="ftx:AW25_93"/>
<dbReference type="BioCyc" id="FTUL401614:G1G75-111-MONOMER"/>
<dbReference type="Proteomes" id="UP000000762">
    <property type="component" value="Chromosome"/>
</dbReference>
<dbReference type="GO" id="GO:0005886">
    <property type="term" value="C:plasma membrane"/>
    <property type="evidence" value="ECO:0007669"/>
    <property type="project" value="UniProtKB-SubCell"/>
</dbReference>
<dbReference type="GO" id="GO:0005525">
    <property type="term" value="F:GTP binding"/>
    <property type="evidence" value="ECO:0007669"/>
    <property type="project" value="UniProtKB-UniRule"/>
</dbReference>
<dbReference type="GO" id="GO:0003924">
    <property type="term" value="F:GTPase activity"/>
    <property type="evidence" value="ECO:0007669"/>
    <property type="project" value="UniProtKB-UniRule"/>
</dbReference>
<dbReference type="GO" id="GO:0097216">
    <property type="term" value="F:guanosine tetraphosphate binding"/>
    <property type="evidence" value="ECO:0007669"/>
    <property type="project" value="UniProtKB-ARBA"/>
</dbReference>
<dbReference type="GO" id="GO:0043022">
    <property type="term" value="F:ribosome binding"/>
    <property type="evidence" value="ECO:0007669"/>
    <property type="project" value="UniProtKB-UniRule"/>
</dbReference>
<dbReference type="GO" id="GO:0003746">
    <property type="term" value="F:translation elongation factor activity"/>
    <property type="evidence" value="ECO:0007669"/>
    <property type="project" value="UniProtKB-UniRule"/>
</dbReference>
<dbReference type="GO" id="GO:0045727">
    <property type="term" value="P:positive regulation of translation"/>
    <property type="evidence" value="ECO:0007669"/>
    <property type="project" value="UniProtKB-UniRule"/>
</dbReference>
<dbReference type="CDD" id="cd03699">
    <property type="entry name" value="EF4_II"/>
    <property type="match status" value="1"/>
</dbReference>
<dbReference type="CDD" id="cd16260">
    <property type="entry name" value="EF4_III"/>
    <property type="match status" value="1"/>
</dbReference>
<dbReference type="CDD" id="cd01890">
    <property type="entry name" value="LepA"/>
    <property type="match status" value="1"/>
</dbReference>
<dbReference type="CDD" id="cd03709">
    <property type="entry name" value="lepA_C"/>
    <property type="match status" value="1"/>
</dbReference>
<dbReference type="FunFam" id="3.40.50.300:FF:000078">
    <property type="entry name" value="Elongation factor 4"/>
    <property type="match status" value="1"/>
</dbReference>
<dbReference type="FunFam" id="2.40.30.10:FF:000015">
    <property type="entry name" value="Translation factor GUF1, mitochondrial"/>
    <property type="match status" value="1"/>
</dbReference>
<dbReference type="FunFam" id="3.30.70.240:FF:000007">
    <property type="entry name" value="Translation factor GUF1, mitochondrial"/>
    <property type="match status" value="1"/>
</dbReference>
<dbReference type="FunFam" id="3.30.70.2570:FF:000001">
    <property type="entry name" value="Translation factor GUF1, mitochondrial"/>
    <property type="match status" value="1"/>
</dbReference>
<dbReference type="FunFam" id="3.30.70.870:FF:000004">
    <property type="entry name" value="Translation factor GUF1, mitochondrial"/>
    <property type="match status" value="1"/>
</dbReference>
<dbReference type="Gene3D" id="3.30.70.240">
    <property type="match status" value="1"/>
</dbReference>
<dbReference type="Gene3D" id="3.30.70.2570">
    <property type="entry name" value="Elongation factor 4, C-terminal domain"/>
    <property type="match status" value="1"/>
</dbReference>
<dbReference type="Gene3D" id="3.30.70.870">
    <property type="entry name" value="Elongation Factor G (Translational Gtpase), domain 3"/>
    <property type="match status" value="1"/>
</dbReference>
<dbReference type="Gene3D" id="3.40.50.300">
    <property type="entry name" value="P-loop containing nucleotide triphosphate hydrolases"/>
    <property type="match status" value="1"/>
</dbReference>
<dbReference type="Gene3D" id="2.40.30.10">
    <property type="entry name" value="Translation factors"/>
    <property type="match status" value="1"/>
</dbReference>
<dbReference type="HAMAP" id="MF_00071">
    <property type="entry name" value="LepA"/>
    <property type="match status" value="1"/>
</dbReference>
<dbReference type="InterPro" id="IPR006297">
    <property type="entry name" value="EF-4"/>
</dbReference>
<dbReference type="InterPro" id="IPR035647">
    <property type="entry name" value="EFG_III/V"/>
</dbReference>
<dbReference type="InterPro" id="IPR000640">
    <property type="entry name" value="EFG_V-like"/>
</dbReference>
<dbReference type="InterPro" id="IPR004161">
    <property type="entry name" value="EFTu-like_2"/>
</dbReference>
<dbReference type="InterPro" id="IPR031157">
    <property type="entry name" value="G_TR_CS"/>
</dbReference>
<dbReference type="InterPro" id="IPR038363">
    <property type="entry name" value="LepA_C_sf"/>
</dbReference>
<dbReference type="InterPro" id="IPR013842">
    <property type="entry name" value="LepA_CTD"/>
</dbReference>
<dbReference type="InterPro" id="IPR035654">
    <property type="entry name" value="LepA_IV"/>
</dbReference>
<dbReference type="InterPro" id="IPR027417">
    <property type="entry name" value="P-loop_NTPase"/>
</dbReference>
<dbReference type="InterPro" id="IPR005225">
    <property type="entry name" value="Small_GTP-bd"/>
</dbReference>
<dbReference type="InterPro" id="IPR000795">
    <property type="entry name" value="T_Tr_GTP-bd_dom"/>
</dbReference>
<dbReference type="NCBIfam" id="TIGR01393">
    <property type="entry name" value="lepA"/>
    <property type="match status" value="1"/>
</dbReference>
<dbReference type="NCBIfam" id="TIGR00231">
    <property type="entry name" value="small_GTP"/>
    <property type="match status" value="1"/>
</dbReference>
<dbReference type="PANTHER" id="PTHR43512:SF4">
    <property type="entry name" value="TRANSLATION FACTOR GUF1 HOMOLOG, CHLOROPLASTIC"/>
    <property type="match status" value="1"/>
</dbReference>
<dbReference type="PANTHER" id="PTHR43512">
    <property type="entry name" value="TRANSLATION FACTOR GUF1-RELATED"/>
    <property type="match status" value="1"/>
</dbReference>
<dbReference type="Pfam" id="PF00679">
    <property type="entry name" value="EFG_C"/>
    <property type="match status" value="1"/>
</dbReference>
<dbReference type="Pfam" id="PF00009">
    <property type="entry name" value="GTP_EFTU"/>
    <property type="match status" value="1"/>
</dbReference>
<dbReference type="Pfam" id="PF03144">
    <property type="entry name" value="GTP_EFTU_D2"/>
    <property type="match status" value="1"/>
</dbReference>
<dbReference type="Pfam" id="PF06421">
    <property type="entry name" value="LepA_C"/>
    <property type="match status" value="1"/>
</dbReference>
<dbReference type="PRINTS" id="PR00315">
    <property type="entry name" value="ELONGATNFCT"/>
</dbReference>
<dbReference type="SUPFAM" id="SSF54980">
    <property type="entry name" value="EF-G C-terminal domain-like"/>
    <property type="match status" value="2"/>
</dbReference>
<dbReference type="SUPFAM" id="SSF52540">
    <property type="entry name" value="P-loop containing nucleoside triphosphate hydrolases"/>
    <property type="match status" value="1"/>
</dbReference>
<dbReference type="PROSITE" id="PS00301">
    <property type="entry name" value="G_TR_1"/>
    <property type="match status" value="1"/>
</dbReference>
<dbReference type="PROSITE" id="PS51722">
    <property type="entry name" value="G_TR_2"/>
    <property type="match status" value="1"/>
</dbReference>
<evidence type="ECO:0000255" key="1">
    <source>
        <dbReference type="HAMAP-Rule" id="MF_00071"/>
    </source>
</evidence>
<gene>
    <name evidence="1" type="primary">lepA</name>
    <name type="ordered locus">FTN_0107</name>
</gene>
<comment type="function">
    <text evidence="1">Required for accurate and efficient protein synthesis under certain stress conditions. May act as a fidelity factor of the translation reaction, by catalyzing a one-codon backward translocation of tRNAs on improperly translocated ribosomes. Back-translocation proceeds from a post-translocation (POST) complex to a pre-translocation (PRE) complex, thus giving elongation factor G a second chance to translocate the tRNAs correctly. Binds to ribosomes in a GTP-dependent manner.</text>
</comment>
<comment type="catalytic activity">
    <reaction evidence="1">
        <text>GTP + H2O = GDP + phosphate + H(+)</text>
        <dbReference type="Rhea" id="RHEA:19669"/>
        <dbReference type="ChEBI" id="CHEBI:15377"/>
        <dbReference type="ChEBI" id="CHEBI:15378"/>
        <dbReference type="ChEBI" id="CHEBI:37565"/>
        <dbReference type="ChEBI" id="CHEBI:43474"/>
        <dbReference type="ChEBI" id="CHEBI:58189"/>
        <dbReference type="EC" id="3.6.5.n1"/>
    </reaction>
</comment>
<comment type="subcellular location">
    <subcellularLocation>
        <location evidence="1">Cell inner membrane</location>
        <topology evidence="1">Peripheral membrane protein</topology>
        <orientation evidence="1">Cytoplasmic side</orientation>
    </subcellularLocation>
</comment>
<comment type="similarity">
    <text evidence="1">Belongs to the TRAFAC class translation factor GTPase superfamily. Classic translation factor GTPase family. LepA subfamily.</text>
</comment>
<name>LEPA_FRATN</name>